<feature type="chain" id="PRO_0000382137" description="ATP synthase subunit delta 2">
    <location>
        <begin position="1"/>
        <end position="179"/>
    </location>
</feature>
<gene>
    <name evidence="1" type="primary">atpH2</name>
    <name type="ordered locus">Pcar_3134</name>
</gene>
<proteinExistence type="inferred from homology"/>
<reference key="1">
    <citation type="submission" date="2005-10" db="EMBL/GenBank/DDBJ databases">
        <title>Complete sequence of Pelobacter carbinolicus DSM 2380.</title>
        <authorList>
            <person name="Copeland A."/>
            <person name="Lucas S."/>
            <person name="Lapidus A."/>
            <person name="Barry K."/>
            <person name="Detter J.C."/>
            <person name="Glavina T."/>
            <person name="Hammon N."/>
            <person name="Israni S."/>
            <person name="Pitluck S."/>
            <person name="Chertkov O."/>
            <person name="Schmutz J."/>
            <person name="Larimer F."/>
            <person name="Land M."/>
            <person name="Kyrpides N."/>
            <person name="Ivanova N."/>
            <person name="Richardson P."/>
        </authorList>
    </citation>
    <scope>NUCLEOTIDE SEQUENCE [LARGE SCALE GENOMIC DNA]</scope>
    <source>
        <strain>DSM 2380 / NBRC 103641 / GraBd1</strain>
    </source>
</reference>
<keyword id="KW-0066">ATP synthesis</keyword>
<keyword id="KW-0997">Cell inner membrane</keyword>
<keyword id="KW-1003">Cell membrane</keyword>
<keyword id="KW-0139">CF(1)</keyword>
<keyword id="KW-0375">Hydrogen ion transport</keyword>
<keyword id="KW-0406">Ion transport</keyword>
<keyword id="KW-0472">Membrane</keyword>
<keyword id="KW-1185">Reference proteome</keyword>
<keyword id="KW-0813">Transport</keyword>
<comment type="function">
    <text evidence="1">F(1)F(0) ATP synthase produces ATP from ADP in the presence of a proton or sodium gradient. F-type ATPases consist of two structural domains, F(1) containing the extramembraneous catalytic core and F(0) containing the membrane proton channel, linked together by a central stalk and a peripheral stalk. During catalysis, ATP synthesis in the catalytic domain of F(1) is coupled via a rotary mechanism of the central stalk subunits to proton translocation.</text>
</comment>
<comment type="function">
    <text evidence="1">This protein is part of the stalk that links CF(0) to CF(1). It either transmits conformational changes from CF(0) to CF(1) or is implicated in proton conduction.</text>
</comment>
<comment type="subunit">
    <text evidence="1">F-type ATPases have 2 components, F(1) - the catalytic core - and F(0) - the membrane proton channel. F(1) has five subunits: alpha(3), beta(3), gamma(1), delta(1), epsilon(1). F(0) has three main subunits: a(1), b(2) and c(10-14). The alpha and beta chains form an alternating ring which encloses part of the gamma chain. F(1) is attached to F(0) by a central stalk formed by the gamma and epsilon chains, while a peripheral stalk is formed by the delta and b chains.</text>
</comment>
<comment type="subcellular location">
    <subcellularLocation>
        <location evidence="1">Cell inner membrane</location>
        <topology evidence="1">Peripheral membrane protein</topology>
    </subcellularLocation>
</comment>
<comment type="similarity">
    <text evidence="1">Belongs to the ATPase delta chain family.</text>
</comment>
<accession>Q39ZT8</accession>
<sequence>MKSTAISRRYAKSLVNLAAPDGQLESTYTQLEQIQQAFACEPRLYKLLASPTLAADKIAGLLEGIGNYLQLSTTLRNLLGLLQQRQRLEYFDALVADYRELADVQLGLVRARVCSAAPLDAEVQQAISAQLQKRYGKQAVLELAVEPELLGGVRIEVAGQVLDGTIRSGLRRMAGYLNS</sequence>
<protein>
    <recommendedName>
        <fullName evidence="1">ATP synthase subunit delta 2</fullName>
    </recommendedName>
    <alternativeName>
        <fullName evidence="1">ATP synthase F(1) sector subunit delta 2</fullName>
    </alternativeName>
    <alternativeName>
        <fullName evidence="1">F-type ATPase subunit delta 2</fullName>
        <shortName evidence="1">F-ATPase subunit delta 2</shortName>
    </alternativeName>
</protein>
<organism>
    <name type="scientific">Syntrophotalea carbinolica (strain DSM 2380 / NBRC 103641 / GraBd1)</name>
    <name type="common">Pelobacter carbinolicus</name>
    <dbReference type="NCBI Taxonomy" id="338963"/>
    <lineage>
        <taxon>Bacteria</taxon>
        <taxon>Pseudomonadati</taxon>
        <taxon>Thermodesulfobacteriota</taxon>
        <taxon>Desulfuromonadia</taxon>
        <taxon>Desulfuromonadales</taxon>
        <taxon>Syntrophotaleaceae</taxon>
        <taxon>Syntrophotalea</taxon>
    </lineage>
</organism>
<evidence type="ECO:0000255" key="1">
    <source>
        <dbReference type="HAMAP-Rule" id="MF_01416"/>
    </source>
</evidence>
<dbReference type="EMBL" id="CP000142">
    <property type="protein sequence ID" value="ABA90369.1"/>
    <property type="molecule type" value="Genomic_DNA"/>
</dbReference>
<dbReference type="RefSeq" id="WP_011342927.1">
    <property type="nucleotide sequence ID" value="NC_007498.2"/>
</dbReference>
<dbReference type="SMR" id="Q39ZT8"/>
<dbReference type="STRING" id="338963.Pcar_3134"/>
<dbReference type="KEGG" id="pca:Pcar_3134"/>
<dbReference type="eggNOG" id="COG0712">
    <property type="taxonomic scope" value="Bacteria"/>
</dbReference>
<dbReference type="HOGENOM" id="CLU_085114_4_1_7"/>
<dbReference type="OrthoDB" id="9802471at2"/>
<dbReference type="Proteomes" id="UP000002534">
    <property type="component" value="Chromosome"/>
</dbReference>
<dbReference type="GO" id="GO:0005886">
    <property type="term" value="C:plasma membrane"/>
    <property type="evidence" value="ECO:0007669"/>
    <property type="project" value="UniProtKB-SubCell"/>
</dbReference>
<dbReference type="GO" id="GO:0045259">
    <property type="term" value="C:proton-transporting ATP synthase complex"/>
    <property type="evidence" value="ECO:0007669"/>
    <property type="project" value="UniProtKB-KW"/>
</dbReference>
<dbReference type="GO" id="GO:0046933">
    <property type="term" value="F:proton-transporting ATP synthase activity, rotational mechanism"/>
    <property type="evidence" value="ECO:0007669"/>
    <property type="project" value="UniProtKB-UniRule"/>
</dbReference>
<dbReference type="Gene3D" id="1.10.520.20">
    <property type="entry name" value="N-terminal domain of the delta subunit of the F1F0-ATP synthase"/>
    <property type="match status" value="1"/>
</dbReference>
<dbReference type="HAMAP" id="MF_01416">
    <property type="entry name" value="ATP_synth_delta_bact"/>
    <property type="match status" value="1"/>
</dbReference>
<dbReference type="InterPro" id="IPR026015">
    <property type="entry name" value="ATP_synth_OSCP/delta_N_sf"/>
</dbReference>
<dbReference type="InterPro" id="IPR000711">
    <property type="entry name" value="ATPase_OSCP/dsu"/>
</dbReference>
<dbReference type="NCBIfam" id="TIGR01145">
    <property type="entry name" value="ATP_synt_delta"/>
    <property type="match status" value="1"/>
</dbReference>
<dbReference type="PANTHER" id="PTHR11910">
    <property type="entry name" value="ATP SYNTHASE DELTA CHAIN"/>
    <property type="match status" value="1"/>
</dbReference>
<dbReference type="Pfam" id="PF00213">
    <property type="entry name" value="OSCP"/>
    <property type="match status" value="1"/>
</dbReference>
<dbReference type="PRINTS" id="PR00125">
    <property type="entry name" value="ATPASEDELTA"/>
</dbReference>
<dbReference type="SUPFAM" id="SSF47928">
    <property type="entry name" value="N-terminal domain of the delta subunit of the F1F0-ATP synthase"/>
    <property type="match status" value="1"/>
</dbReference>
<name>ATPD2_SYNC1</name>